<feature type="chain" id="PRO_1000212874" description="UPF0301 protein RER_60040">
    <location>
        <begin position="1"/>
        <end position="201"/>
    </location>
</feature>
<accession>C0ZVL8</accession>
<proteinExistence type="inferred from homology"/>
<sequence length="201" mass="22073">MAHAEEPEDRMAWIEPEVRPGSLLVSSTDLTEPAFRRTVIYMIEHNDAGSLGVIVNRPSETAVQNVLPQWSPLTAHPSALYIGGPVKRDSALCLGIARNGARIDGVAGLRRVDGKVVMVDLDSDPEVIAPLVEGIRIFAGYSGWTLGQLDSELEREDWMVISSLPSDVLTPPRVDVWARVLRRQPLPVAMLASHPIEVERN</sequence>
<name>Y6004_RHOE4</name>
<reference key="1">
    <citation type="submission" date="2005-03" db="EMBL/GenBank/DDBJ databases">
        <title>Comparison of the complete genome sequences of Rhodococcus erythropolis PR4 and Rhodococcus opacus B4.</title>
        <authorList>
            <person name="Takarada H."/>
            <person name="Sekine M."/>
            <person name="Hosoyama A."/>
            <person name="Yamada R."/>
            <person name="Fujisawa T."/>
            <person name="Omata S."/>
            <person name="Shimizu A."/>
            <person name="Tsukatani N."/>
            <person name="Tanikawa S."/>
            <person name="Fujita N."/>
            <person name="Harayama S."/>
        </authorList>
    </citation>
    <scope>NUCLEOTIDE SEQUENCE [LARGE SCALE GENOMIC DNA]</scope>
    <source>
        <strain>PR4 / NBRC 100887</strain>
    </source>
</reference>
<dbReference type="EMBL" id="AP008957">
    <property type="protein sequence ID" value="BAH36712.1"/>
    <property type="molecule type" value="Genomic_DNA"/>
</dbReference>
<dbReference type="RefSeq" id="WP_020909845.1">
    <property type="nucleotide sequence ID" value="NC_012490.1"/>
</dbReference>
<dbReference type="SMR" id="C0ZVL8"/>
<dbReference type="KEGG" id="rer:RER_60040"/>
<dbReference type="eggNOG" id="COG1678">
    <property type="taxonomic scope" value="Bacteria"/>
</dbReference>
<dbReference type="HOGENOM" id="CLU_057596_2_0_11"/>
<dbReference type="Proteomes" id="UP000002204">
    <property type="component" value="Chromosome"/>
</dbReference>
<dbReference type="GO" id="GO:0005829">
    <property type="term" value="C:cytosol"/>
    <property type="evidence" value="ECO:0007669"/>
    <property type="project" value="TreeGrafter"/>
</dbReference>
<dbReference type="Gene3D" id="3.40.1740.10">
    <property type="entry name" value="VC0467-like"/>
    <property type="match status" value="1"/>
</dbReference>
<dbReference type="HAMAP" id="MF_00758">
    <property type="entry name" value="UPF0301"/>
    <property type="match status" value="1"/>
</dbReference>
<dbReference type="InterPro" id="IPR003774">
    <property type="entry name" value="AlgH-like"/>
</dbReference>
<dbReference type="NCBIfam" id="NF001269">
    <property type="entry name" value="PRK00228.2-1"/>
    <property type="match status" value="1"/>
</dbReference>
<dbReference type="NCBIfam" id="NF001272">
    <property type="entry name" value="PRK00228.2-4"/>
    <property type="match status" value="1"/>
</dbReference>
<dbReference type="PANTHER" id="PTHR30327">
    <property type="entry name" value="UNCHARACTERIZED PROTEIN YQGE"/>
    <property type="match status" value="1"/>
</dbReference>
<dbReference type="PANTHER" id="PTHR30327:SF1">
    <property type="entry name" value="UPF0301 PROTEIN YQGE"/>
    <property type="match status" value="1"/>
</dbReference>
<dbReference type="Pfam" id="PF02622">
    <property type="entry name" value="DUF179"/>
    <property type="match status" value="1"/>
</dbReference>
<dbReference type="SUPFAM" id="SSF143456">
    <property type="entry name" value="VC0467-like"/>
    <property type="match status" value="1"/>
</dbReference>
<organism>
    <name type="scientific">Rhodococcus erythropolis (strain PR4 / NBRC 100887)</name>
    <dbReference type="NCBI Taxonomy" id="234621"/>
    <lineage>
        <taxon>Bacteria</taxon>
        <taxon>Bacillati</taxon>
        <taxon>Actinomycetota</taxon>
        <taxon>Actinomycetes</taxon>
        <taxon>Mycobacteriales</taxon>
        <taxon>Nocardiaceae</taxon>
        <taxon>Rhodococcus</taxon>
        <taxon>Rhodococcus erythropolis group</taxon>
    </lineage>
</organism>
<protein>
    <recommendedName>
        <fullName evidence="1">UPF0301 protein RER_60040</fullName>
    </recommendedName>
</protein>
<comment type="similarity">
    <text evidence="1">Belongs to the UPF0301 (AlgH) family.</text>
</comment>
<evidence type="ECO:0000255" key="1">
    <source>
        <dbReference type="HAMAP-Rule" id="MF_00758"/>
    </source>
</evidence>
<gene>
    <name type="ordered locus">RER_60040</name>
</gene>